<organism>
    <name type="scientific">Rhodopseudomonas palustris (strain HaA2)</name>
    <dbReference type="NCBI Taxonomy" id="316058"/>
    <lineage>
        <taxon>Bacteria</taxon>
        <taxon>Pseudomonadati</taxon>
        <taxon>Pseudomonadota</taxon>
        <taxon>Alphaproteobacteria</taxon>
        <taxon>Hyphomicrobiales</taxon>
        <taxon>Nitrobacteraceae</taxon>
        <taxon>Rhodopseudomonas</taxon>
    </lineage>
</organism>
<accession>Q2J3G9</accession>
<sequence length="398" mass="42392">MNIHEYQAKAVLREFGVPVSHGYPIFKASEAEAAATKLGGPVWVVKSQIHAGGRGKGKFKEASAGDKGGVRLAKSVDEVKTYAEQMLHATLVTVQTGPAGKQVNRLYIEEGSEIDKEFYLSLLVDRATSRISFVVSTEGGMSIEDVAHDTPEKIVSFTVDPATGIMSHHGRAVANALGLKGDQAKQAESLVTKLYTAFLAKDMEMLEINPLVLTKQGDLKCLDAKMSFDGNSLYRHADIQGLRDESEEDAKEIEASKYDLNYVTLDGTIGCMVNGAGLAMATMDIIKLYGMTPANFLDVGGGASKEKVTAAFKIITADPNVKGILINIFGGIMKCDIIAEGVVAAVKEVGLDVPLVVRLEGTNVEAGKKIIKHSGLNVLPADNLDDAAQKIVNAVKGA</sequence>
<feature type="chain" id="PRO_1000082189" description="Succinate--CoA ligase [ADP-forming] subunit beta">
    <location>
        <begin position="1"/>
        <end position="398"/>
    </location>
</feature>
<feature type="domain" description="ATP-grasp" evidence="1">
    <location>
        <begin position="9"/>
        <end position="254"/>
    </location>
</feature>
<feature type="binding site" evidence="1">
    <location>
        <position position="46"/>
    </location>
    <ligand>
        <name>ATP</name>
        <dbReference type="ChEBI" id="CHEBI:30616"/>
    </ligand>
</feature>
<feature type="binding site" evidence="1">
    <location>
        <begin position="53"/>
        <end position="55"/>
    </location>
    <ligand>
        <name>ATP</name>
        <dbReference type="ChEBI" id="CHEBI:30616"/>
    </ligand>
</feature>
<feature type="binding site" evidence="1">
    <location>
        <position position="109"/>
    </location>
    <ligand>
        <name>ATP</name>
        <dbReference type="ChEBI" id="CHEBI:30616"/>
    </ligand>
</feature>
<feature type="binding site" evidence="1">
    <location>
        <position position="112"/>
    </location>
    <ligand>
        <name>ATP</name>
        <dbReference type="ChEBI" id="CHEBI:30616"/>
    </ligand>
</feature>
<feature type="binding site" evidence="1">
    <location>
        <position position="117"/>
    </location>
    <ligand>
        <name>ATP</name>
        <dbReference type="ChEBI" id="CHEBI:30616"/>
    </ligand>
</feature>
<feature type="binding site" evidence="1">
    <location>
        <position position="209"/>
    </location>
    <ligand>
        <name>Mg(2+)</name>
        <dbReference type="ChEBI" id="CHEBI:18420"/>
    </ligand>
</feature>
<feature type="binding site" evidence="1">
    <location>
        <position position="223"/>
    </location>
    <ligand>
        <name>Mg(2+)</name>
        <dbReference type="ChEBI" id="CHEBI:18420"/>
    </ligand>
</feature>
<feature type="binding site" evidence="1">
    <location>
        <position position="274"/>
    </location>
    <ligand>
        <name>substrate</name>
        <note>ligand shared with subunit alpha</note>
    </ligand>
</feature>
<feature type="binding site" evidence="1">
    <location>
        <begin position="331"/>
        <end position="333"/>
    </location>
    <ligand>
        <name>substrate</name>
        <note>ligand shared with subunit alpha</note>
    </ligand>
</feature>
<name>SUCC_RHOP2</name>
<protein>
    <recommendedName>
        <fullName evidence="1">Succinate--CoA ligase [ADP-forming] subunit beta</fullName>
        <ecNumber evidence="1">6.2.1.5</ecNumber>
    </recommendedName>
    <alternativeName>
        <fullName evidence="1">Succinyl-CoA synthetase subunit beta</fullName>
        <shortName evidence="1">SCS-beta</shortName>
    </alternativeName>
</protein>
<dbReference type="EC" id="6.2.1.5" evidence="1"/>
<dbReference type="EMBL" id="CP000250">
    <property type="protein sequence ID" value="ABD04991.1"/>
    <property type="molecule type" value="Genomic_DNA"/>
</dbReference>
<dbReference type="RefSeq" id="WP_011439181.1">
    <property type="nucleotide sequence ID" value="NC_007778.1"/>
</dbReference>
<dbReference type="SMR" id="Q2J3G9"/>
<dbReference type="STRING" id="316058.RPB_0280"/>
<dbReference type="KEGG" id="rpb:RPB_0280"/>
<dbReference type="eggNOG" id="COG0045">
    <property type="taxonomic scope" value="Bacteria"/>
</dbReference>
<dbReference type="HOGENOM" id="CLU_037430_0_2_5"/>
<dbReference type="OrthoDB" id="9802602at2"/>
<dbReference type="UniPathway" id="UPA00223">
    <property type="reaction ID" value="UER00999"/>
</dbReference>
<dbReference type="Proteomes" id="UP000008809">
    <property type="component" value="Chromosome"/>
</dbReference>
<dbReference type="GO" id="GO:0005829">
    <property type="term" value="C:cytosol"/>
    <property type="evidence" value="ECO:0007669"/>
    <property type="project" value="TreeGrafter"/>
</dbReference>
<dbReference type="GO" id="GO:0042709">
    <property type="term" value="C:succinate-CoA ligase complex"/>
    <property type="evidence" value="ECO:0007669"/>
    <property type="project" value="TreeGrafter"/>
</dbReference>
<dbReference type="GO" id="GO:0005524">
    <property type="term" value="F:ATP binding"/>
    <property type="evidence" value="ECO:0007669"/>
    <property type="project" value="UniProtKB-UniRule"/>
</dbReference>
<dbReference type="GO" id="GO:0000287">
    <property type="term" value="F:magnesium ion binding"/>
    <property type="evidence" value="ECO:0007669"/>
    <property type="project" value="UniProtKB-UniRule"/>
</dbReference>
<dbReference type="GO" id="GO:0004775">
    <property type="term" value="F:succinate-CoA ligase (ADP-forming) activity"/>
    <property type="evidence" value="ECO:0007669"/>
    <property type="project" value="UniProtKB-UniRule"/>
</dbReference>
<dbReference type="GO" id="GO:0004776">
    <property type="term" value="F:succinate-CoA ligase (GDP-forming) activity"/>
    <property type="evidence" value="ECO:0007669"/>
    <property type="project" value="RHEA"/>
</dbReference>
<dbReference type="GO" id="GO:0006104">
    <property type="term" value="P:succinyl-CoA metabolic process"/>
    <property type="evidence" value="ECO:0007669"/>
    <property type="project" value="TreeGrafter"/>
</dbReference>
<dbReference type="GO" id="GO:0006099">
    <property type="term" value="P:tricarboxylic acid cycle"/>
    <property type="evidence" value="ECO:0007669"/>
    <property type="project" value="UniProtKB-UniRule"/>
</dbReference>
<dbReference type="FunFam" id="3.30.1490.20:FF:000002">
    <property type="entry name" value="Succinate--CoA ligase [ADP-forming] subunit beta"/>
    <property type="match status" value="1"/>
</dbReference>
<dbReference type="FunFam" id="3.30.470.20:FF:000002">
    <property type="entry name" value="Succinate--CoA ligase [ADP-forming] subunit beta"/>
    <property type="match status" value="1"/>
</dbReference>
<dbReference type="FunFam" id="3.40.50.261:FF:000001">
    <property type="entry name" value="Succinate--CoA ligase [ADP-forming] subunit beta"/>
    <property type="match status" value="1"/>
</dbReference>
<dbReference type="Gene3D" id="3.30.1490.20">
    <property type="entry name" value="ATP-grasp fold, A domain"/>
    <property type="match status" value="1"/>
</dbReference>
<dbReference type="Gene3D" id="3.30.470.20">
    <property type="entry name" value="ATP-grasp fold, B domain"/>
    <property type="match status" value="1"/>
</dbReference>
<dbReference type="Gene3D" id="3.40.50.261">
    <property type="entry name" value="Succinyl-CoA synthetase domains"/>
    <property type="match status" value="1"/>
</dbReference>
<dbReference type="HAMAP" id="MF_00558">
    <property type="entry name" value="Succ_CoA_beta"/>
    <property type="match status" value="1"/>
</dbReference>
<dbReference type="InterPro" id="IPR011761">
    <property type="entry name" value="ATP-grasp"/>
</dbReference>
<dbReference type="InterPro" id="IPR013650">
    <property type="entry name" value="ATP-grasp_succ-CoA_synth-type"/>
</dbReference>
<dbReference type="InterPro" id="IPR013815">
    <property type="entry name" value="ATP_grasp_subdomain_1"/>
</dbReference>
<dbReference type="InterPro" id="IPR005811">
    <property type="entry name" value="SUCC_ACL_C"/>
</dbReference>
<dbReference type="InterPro" id="IPR005809">
    <property type="entry name" value="Succ_CoA_ligase-like_bsu"/>
</dbReference>
<dbReference type="InterPro" id="IPR016102">
    <property type="entry name" value="Succinyl-CoA_synth-like"/>
</dbReference>
<dbReference type="NCBIfam" id="NF001913">
    <property type="entry name" value="PRK00696.1"/>
    <property type="match status" value="1"/>
</dbReference>
<dbReference type="NCBIfam" id="TIGR01016">
    <property type="entry name" value="sucCoAbeta"/>
    <property type="match status" value="1"/>
</dbReference>
<dbReference type="PANTHER" id="PTHR11815:SF10">
    <property type="entry name" value="SUCCINATE--COA LIGASE [GDP-FORMING] SUBUNIT BETA, MITOCHONDRIAL"/>
    <property type="match status" value="1"/>
</dbReference>
<dbReference type="PANTHER" id="PTHR11815">
    <property type="entry name" value="SUCCINYL-COA SYNTHETASE BETA CHAIN"/>
    <property type="match status" value="1"/>
</dbReference>
<dbReference type="Pfam" id="PF08442">
    <property type="entry name" value="ATP-grasp_2"/>
    <property type="match status" value="1"/>
</dbReference>
<dbReference type="Pfam" id="PF00549">
    <property type="entry name" value="Ligase_CoA"/>
    <property type="match status" value="1"/>
</dbReference>
<dbReference type="PIRSF" id="PIRSF001554">
    <property type="entry name" value="SucCS_beta"/>
    <property type="match status" value="1"/>
</dbReference>
<dbReference type="SUPFAM" id="SSF56059">
    <property type="entry name" value="Glutathione synthetase ATP-binding domain-like"/>
    <property type="match status" value="1"/>
</dbReference>
<dbReference type="SUPFAM" id="SSF52210">
    <property type="entry name" value="Succinyl-CoA synthetase domains"/>
    <property type="match status" value="1"/>
</dbReference>
<dbReference type="PROSITE" id="PS50975">
    <property type="entry name" value="ATP_GRASP"/>
    <property type="match status" value="1"/>
</dbReference>
<comment type="function">
    <text evidence="1">Succinyl-CoA synthetase functions in the citric acid cycle (TCA), coupling the hydrolysis of succinyl-CoA to the synthesis of either ATP or GTP and thus represents the only step of substrate-level phosphorylation in the TCA. The beta subunit provides nucleotide specificity of the enzyme and binds the substrate succinate, while the binding sites for coenzyme A and phosphate are found in the alpha subunit.</text>
</comment>
<comment type="catalytic activity">
    <reaction evidence="1">
        <text>succinate + ATP + CoA = succinyl-CoA + ADP + phosphate</text>
        <dbReference type="Rhea" id="RHEA:17661"/>
        <dbReference type="ChEBI" id="CHEBI:30031"/>
        <dbReference type="ChEBI" id="CHEBI:30616"/>
        <dbReference type="ChEBI" id="CHEBI:43474"/>
        <dbReference type="ChEBI" id="CHEBI:57287"/>
        <dbReference type="ChEBI" id="CHEBI:57292"/>
        <dbReference type="ChEBI" id="CHEBI:456216"/>
        <dbReference type="EC" id="6.2.1.5"/>
    </reaction>
    <physiologicalReaction direction="right-to-left" evidence="1">
        <dbReference type="Rhea" id="RHEA:17663"/>
    </physiologicalReaction>
</comment>
<comment type="catalytic activity">
    <reaction evidence="1">
        <text>GTP + succinate + CoA = succinyl-CoA + GDP + phosphate</text>
        <dbReference type="Rhea" id="RHEA:22120"/>
        <dbReference type="ChEBI" id="CHEBI:30031"/>
        <dbReference type="ChEBI" id="CHEBI:37565"/>
        <dbReference type="ChEBI" id="CHEBI:43474"/>
        <dbReference type="ChEBI" id="CHEBI:57287"/>
        <dbReference type="ChEBI" id="CHEBI:57292"/>
        <dbReference type="ChEBI" id="CHEBI:58189"/>
    </reaction>
    <physiologicalReaction direction="right-to-left" evidence="1">
        <dbReference type="Rhea" id="RHEA:22122"/>
    </physiologicalReaction>
</comment>
<comment type="cofactor">
    <cofactor evidence="1">
        <name>Mg(2+)</name>
        <dbReference type="ChEBI" id="CHEBI:18420"/>
    </cofactor>
    <text evidence="1">Binds 1 Mg(2+) ion per subunit.</text>
</comment>
<comment type="pathway">
    <text evidence="1">Carbohydrate metabolism; tricarboxylic acid cycle; succinate from succinyl-CoA (ligase route): step 1/1.</text>
</comment>
<comment type="subunit">
    <text evidence="1">Heterotetramer of two alpha and two beta subunits.</text>
</comment>
<comment type="similarity">
    <text evidence="1">Belongs to the succinate/malate CoA ligase beta subunit family.</text>
</comment>
<evidence type="ECO:0000255" key="1">
    <source>
        <dbReference type="HAMAP-Rule" id="MF_00558"/>
    </source>
</evidence>
<reference key="1">
    <citation type="submission" date="2006-01" db="EMBL/GenBank/DDBJ databases">
        <title>Complete sequence of Rhodopseudomonas palustris HaA2.</title>
        <authorList>
            <consortium name="US DOE Joint Genome Institute"/>
            <person name="Copeland A."/>
            <person name="Lucas S."/>
            <person name="Lapidus A."/>
            <person name="Barry K."/>
            <person name="Detter J.C."/>
            <person name="Glavina T."/>
            <person name="Hammon N."/>
            <person name="Israni S."/>
            <person name="Pitluck S."/>
            <person name="Chain P."/>
            <person name="Malfatti S."/>
            <person name="Shin M."/>
            <person name="Vergez L."/>
            <person name="Schmutz J."/>
            <person name="Larimer F."/>
            <person name="Land M."/>
            <person name="Hauser L."/>
            <person name="Pelletier D.A."/>
            <person name="Kyrpides N."/>
            <person name="Anderson I."/>
            <person name="Oda Y."/>
            <person name="Harwood C.S."/>
            <person name="Richardson P."/>
        </authorList>
    </citation>
    <scope>NUCLEOTIDE SEQUENCE [LARGE SCALE GENOMIC DNA]</scope>
    <source>
        <strain>HaA2</strain>
    </source>
</reference>
<gene>
    <name evidence="1" type="primary">sucC</name>
    <name type="ordered locus">RPB_0280</name>
</gene>
<keyword id="KW-0067">ATP-binding</keyword>
<keyword id="KW-0436">Ligase</keyword>
<keyword id="KW-0460">Magnesium</keyword>
<keyword id="KW-0479">Metal-binding</keyword>
<keyword id="KW-0547">Nucleotide-binding</keyword>
<keyword id="KW-1185">Reference proteome</keyword>
<keyword id="KW-0816">Tricarboxylic acid cycle</keyword>
<proteinExistence type="inferred from homology"/>